<evidence type="ECO:0000250" key="1"/>
<evidence type="ECO:0000250" key="2">
    <source>
        <dbReference type="UniProtKB" id="Q8CI08"/>
    </source>
</evidence>
<evidence type="ECO:0000250" key="3">
    <source>
        <dbReference type="UniProtKB" id="Q9P270"/>
    </source>
</evidence>
<evidence type="ECO:0000255" key="4"/>
<evidence type="ECO:0000256" key="5">
    <source>
        <dbReference type="SAM" id="MobiDB-lite"/>
    </source>
</evidence>
<evidence type="ECO:0000305" key="6"/>
<keyword id="KW-0007">Acetylation</keyword>
<keyword id="KW-0175">Coiled coil</keyword>
<keyword id="KW-0963">Cytoplasm</keyword>
<keyword id="KW-0206">Cytoskeleton</keyword>
<keyword id="KW-0488">Methylation</keyword>
<keyword id="KW-0597">Phosphoprotein</keyword>
<keyword id="KW-1185">Reference proteome</keyword>
<proteinExistence type="evidence at transcript level"/>
<comment type="function">
    <text evidence="1">Binds to the plus end of microtubules and regulates microtubule dynamics and microtubule organization. Promotes cytoplasmic microtubule nucleation and elongation. Required for normal structure of the microtubule cytoskeleton during interphase (By similarity).</text>
</comment>
<comment type="subunit">
    <text evidence="1">Interacts with CLIP1, CLIP2, CKAP5, CLASP1, MAPRE1 and MAPRE3.</text>
</comment>
<comment type="subcellular location">
    <subcellularLocation>
        <location evidence="1">Cytoplasm</location>
        <location evidence="1">Cytoskeleton</location>
    </subcellularLocation>
    <text evidence="1">Colocalizes with microtubules. Detected at the plus end of growing microtubules (By similarity).</text>
</comment>
<comment type="domain">
    <text evidence="1">The N-terminus forms a two-stranded coiled coil.</text>
</comment>
<comment type="PTM">
    <text evidence="1">Is highly phosphorylated during mitosis, but not during interphase. The highly phosphorylated form does not localize at microtubule plus ends and does not interact with MAPRE1 or CKAP5 (By similarity).</text>
</comment>
<comment type="similarity">
    <text evidence="6">Belongs to the SLAIN motif-containing family.</text>
</comment>
<protein>
    <recommendedName>
        <fullName>SLAIN motif-containing protein 2</fullName>
    </recommendedName>
</protein>
<dbReference type="EMBL" id="BC104624">
    <property type="protein sequence ID" value="AAI04625.1"/>
    <property type="molecule type" value="mRNA"/>
</dbReference>
<dbReference type="RefSeq" id="NP_001030482.1">
    <property type="nucleotide sequence ID" value="NM_001035405.1"/>
</dbReference>
<dbReference type="SMR" id="Q3MHV6"/>
<dbReference type="FunCoup" id="Q3MHV6">
    <property type="interactions" value="1347"/>
</dbReference>
<dbReference type="STRING" id="9913.ENSBTAP00000029282"/>
<dbReference type="PaxDb" id="9913-ENSBTAP00000029282"/>
<dbReference type="Ensembl" id="ENSBTAT00000079432.2">
    <property type="protein sequence ID" value="ENSBTAP00000067474.1"/>
    <property type="gene ID" value="ENSBTAG00000021963.7"/>
</dbReference>
<dbReference type="GeneID" id="534203"/>
<dbReference type="KEGG" id="bta:534203"/>
<dbReference type="CTD" id="57606"/>
<dbReference type="VEuPathDB" id="HostDB:ENSBTAG00000021963"/>
<dbReference type="VGNC" id="VGNC:34652">
    <property type="gene designation" value="SLAIN2"/>
</dbReference>
<dbReference type="eggNOG" id="ENOG502QSZP">
    <property type="taxonomic scope" value="Eukaryota"/>
</dbReference>
<dbReference type="GeneTree" id="ENSGT00390000017860"/>
<dbReference type="HOGENOM" id="CLU_027278_2_0_1"/>
<dbReference type="InParanoid" id="Q3MHV6"/>
<dbReference type="OrthoDB" id="9943255at2759"/>
<dbReference type="Proteomes" id="UP000009136">
    <property type="component" value="Chromosome 6"/>
</dbReference>
<dbReference type="Bgee" id="ENSBTAG00000021963">
    <property type="expression patterns" value="Expressed in cardiac ventricle and 106 other cell types or tissues"/>
</dbReference>
<dbReference type="GO" id="GO:0005737">
    <property type="term" value="C:cytoplasm"/>
    <property type="evidence" value="ECO:0007669"/>
    <property type="project" value="UniProtKB-KW"/>
</dbReference>
<dbReference type="GO" id="GO:0015630">
    <property type="term" value="C:microtubule cytoskeleton"/>
    <property type="evidence" value="ECO:0000250"/>
    <property type="project" value="UniProtKB"/>
</dbReference>
<dbReference type="GO" id="GO:0031122">
    <property type="term" value="P:cytoplasmic microtubule organization"/>
    <property type="evidence" value="ECO:0000250"/>
    <property type="project" value="UniProtKB"/>
</dbReference>
<dbReference type="GO" id="GO:0007020">
    <property type="term" value="P:microtubule nucleation"/>
    <property type="evidence" value="ECO:0000250"/>
    <property type="project" value="UniProtKB"/>
</dbReference>
<dbReference type="GO" id="GO:0031116">
    <property type="term" value="P:positive regulation of microtubule polymerization"/>
    <property type="evidence" value="ECO:0000250"/>
    <property type="project" value="UniProtKB"/>
</dbReference>
<dbReference type="InterPro" id="IPR026179">
    <property type="entry name" value="Slain"/>
</dbReference>
<dbReference type="PANTHER" id="PTHR22406">
    <property type="entry name" value="NASCENT POLYPEPTIDE-ASSOCIATED COMPLEX SUBUNIT ALPHA, MUSCLE-SPECIFIC FORM"/>
    <property type="match status" value="1"/>
</dbReference>
<dbReference type="PANTHER" id="PTHR22406:SF4">
    <property type="entry name" value="SLAIN MOTIF-CONTAINING PROTEIN 2"/>
    <property type="match status" value="1"/>
</dbReference>
<dbReference type="Pfam" id="PF15301">
    <property type="entry name" value="SLAIN"/>
    <property type="match status" value="1"/>
</dbReference>
<gene>
    <name type="primary">SLAIN2</name>
</gene>
<name>SLAI2_BOVIN</name>
<accession>Q3MHV6</accession>
<reference key="1">
    <citation type="submission" date="2005-09" db="EMBL/GenBank/DDBJ databases">
        <authorList>
            <consortium name="NIH - Mammalian Gene Collection (MGC) project"/>
        </authorList>
    </citation>
    <scope>NUCLEOTIDE SEQUENCE [LARGE SCALE MRNA]</scope>
    <source>
        <strain>Hereford</strain>
        <tissue>Ascending colon</tissue>
    </source>
</reference>
<feature type="chain" id="PRO_0000316966" description="SLAIN motif-containing protein 2">
    <location>
        <begin position="1"/>
        <end position="582"/>
    </location>
</feature>
<feature type="region of interest" description="Disordered" evidence="5">
    <location>
        <begin position="28"/>
        <end position="113"/>
    </location>
</feature>
<feature type="region of interest" description="Disordered" evidence="5">
    <location>
        <begin position="200"/>
        <end position="262"/>
    </location>
</feature>
<feature type="region of interest" description="Disordered" evidence="5">
    <location>
        <begin position="293"/>
        <end position="318"/>
    </location>
</feature>
<feature type="region of interest" description="Disordered" evidence="5">
    <location>
        <begin position="339"/>
        <end position="582"/>
    </location>
</feature>
<feature type="coiled-coil region" evidence="4">
    <location>
        <begin position="7"/>
        <end position="39"/>
    </location>
</feature>
<feature type="compositionally biased region" description="Low complexity" evidence="5">
    <location>
        <begin position="51"/>
        <end position="76"/>
    </location>
</feature>
<feature type="compositionally biased region" description="Low complexity" evidence="5">
    <location>
        <begin position="200"/>
        <end position="219"/>
    </location>
</feature>
<feature type="compositionally biased region" description="Polar residues" evidence="5">
    <location>
        <begin position="233"/>
        <end position="243"/>
    </location>
</feature>
<feature type="compositionally biased region" description="Low complexity" evidence="5">
    <location>
        <begin position="251"/>
        <end position="260"/>
    </location>
</feature>
<feature type="compositionally biased region" description="Low complexity" evidence="5">
    <location>
        <begin position="295"/>
        <end position="313"/>
    </location>
</feature>
<feature type="compositionally biased region" description="Low complexity" evidence="5">
    <location>
        <begin position="357"/>
        <end position="368"/>
    </location>
</feature>
<feature type="compositionally biased region" description="Polar residues" evidence="5">
    <location>
        <begin position="416"/>
        <end position="440"/>
    </location>
</feature>
<feature type="compositionally biased region" description="Polar residues" evidence="5">
    <location>
        <begin position="481"/>
        <end position="525"/>
    </location>
</feature>
<feature type="compositionally biased region" description="Basic and acidic residues" evidence="5">
    <location>
        <begin position="572"/>
        <end position="582"/>
    </location>
</feature>
<feature type="site" description="Important for interaction with CLIP1" evidence="1">
    <location>
        <position position="582"/>
    </location>
</feature>
<feature type="modified residue" description="N-acetylmethionine" evidence="3">
    <location>
        <position position="1"/>
    </location>
</feature>
<feature type="modified residue" description="Phosphoserine" evidence="3">
    <location>
        <position position="43"/>
    </location>
</feature>
<feature type="modified residue" description="Phosphoserine" evidence="3">
    <location>
        <position position="48"/>
    </location>
</feature>
<feature type="modified residue" description="Phosphoserine" evidence="3">
    <location>
        <position position="63"/>
    </location>
</feature>
<feature type="modified residue" description="Phosphoserine" evidence="2">
    <location>
        <position position="88"/>
    </location>
</feature>
<feature type="modified residue" description="Phosphoserine" evidence="3">
    <location>
        <position position="134"/>
    </location>
</feature>
<feature type="modified residue" description="Phosphoserine" evidence="3">
    <location>
        <position position="147"/>
    </location>
</feature>
<feature type="modified residue" description="Phosphoserine" evidence="3">
    <location>
        <position position="160"/>
    </location>
</feature>
<feature type="modified residue" description="Phosphoserine" evidence="3">
    <location>
        <position position="179"/>
    </location>
</feature>
<feature type="modified residue" description="Phosphoserine" evidence="3">
    <location>
        <position position="248"/>
    </location>
</feature>
<feature type="modified residue" description="Phosphoserine" evidence="3">
    <location>
        <position position="251"/>
    </location>
</feature>
<feature type="modified residue" description="Phosphoserine" evidence="3">
    <location>
        <position position="252"/>
    </location>
</feature>
<feature type="modified residue" description="Phosphoserine" evidence="3">
    <location>
        <position position="255"/>
    </location>
</feature>
<feature type="modified residue" description="Phosphoserine" evidence="3">
    <location>
        <position position="316"/>
    </location>
</feature>
<feature type="modified residue" description="Phosphoserine" evidence="3">
    <location>
        <position position="324"/>
    </location>
</feature>
<feature type="modified residue" description="Phosphoserine" evidence="3">
    <location>
        <position position="378"/>
    </location>
</feature>
<feature type="modified residue" description="Phosphoserine" evidence="3">
    <location>
        <position position="392"/>
    </location>
</feature>
<feature type="modified residue" description="Phosphoserine" evidence="3">
    <location>
        <position position="414"/>
    </location>
</feature>
<feature type="modified residue" description="Phosphoserine" evidence="3">
    <location>
        <position position="434"/>
    </location>
</feature>
<feature type="modified residue" description="Phosphoserine" evidence="3">
    <location>
        <position position="457"/>
    </location>
</feature>
<feature type="modified residue" description="Phosphoserine" evidence="3">
    <location>
        <position position="463"/>
    </location>
</feature>
<feature type="modified residue" description="Phosphoserine" evidence="3">
    <location>
        <position position="468"/>
    </location>
</feature>
<feature type="modified residue" description="Omega-N-methylarginine" evidence="2">
    <location>
        <position position="539"/>
    </location>
</feature>
<feature type="modified residue" description="Omega-N-methylarginine" evidence="3">
    <location>
        <position position="552"/>
    </location>
</feature>
<organism>
    <name type="scientific">Bos taurus</name>
    <name type="common">Bovine</name>
    <dbReference type="NCBI Taxonomy" id="9913"/>
    <lineage>
        <taxon>Eukaryota</taxon>
        <taxon>Metazoa</taxon>
        <taxon>Chordata</taxon>
        <taxon>Craniata</taxon>
        <taxon>Vertebrata</taxon>
        <taxon>Euteleostomi</taxon>
        <taxon>Mammalia</taxon>
        <taxon>Eutheria</taxon>
        <taxon>Laurasiatheria</taxon>
        <taxon>Artiodactyla</taxon>
        <taxon>Ruminantia</taxon>
        <taxon>Pecora</taxon>
        <taxon>Bovidae</taxon>
        <taxon>Bovinae</taxon>
        <taxon>Bos</taxon>
    </lineage>
</organism>
<sequence>MEDVNSDVNADQEVRKLQELVKMLEKQNEQLRSRSGAVQGAGSFGPGSPVRAGASTPSSGTASPRGFPLGLSAKSGSGAGSGPRRTSSEELRDATSLLAAGEGGLLDEVEPLRPEELERLSGWEEEEESWLYSSPKKKLTPMQKSVSPLVWCRQVLDYPSPDVECAKKSLIHKLDQTMSALKRQNLYNNPFNSVSYTSPYSPNASSPYSSGFNSPSSTPVRPPIVKQLILPGNSGNLKSSSDRNPPLSPQSSIDSELSASELDEDSIGSNYKLNDVTDVQILARMQEESLRQEYAATASRRSSGSSCNSTRRGTFSDQELDAQSLDDEDDNMHHAVYPAVNRFSPSPRNSPRPSPKQSPRNSPRSRSPARGIEYSRVSPQPMISRLQQPRLSLQGHPTDLQTTNVKNEEKLRRSLPNLSRTSNTQVDSVKSSRSDSNFQVPNGGIPRMQPQASAIPSPGKFRSPAAPSPLALRQPVKAFSNHGSGSPGSQETTQLMQTTSSPGPPMVQNTVPANPPSNINSTTLTRPAGTTVMRSGLPRPSAPSAGGIPVPRSKLAQPVRRSLPAPKTYGSMKDDSWKDGCY</sequence>